<accession>P80216</accession>
<organism>
    <name type="scientific">Aptenodytes forsteri</name>
    <name type="common">Emperor penguin</name>
    <dbReference type="NCBI Taxonomy" id="9233"/>
    <lineage>
        <taxon>Eukaryota</taxon>
        <taxon>Metazoa</taxon>
        <taxon>Chordata</taxon>
        <taxon>Craniata</taxon>
        <taxon>Vertebrata</taxon>
        <taxon>Euteleostomi</taxon>
        <taxon>Archelosauria</taxon>
        <taxon>Archosauria</taxon>
        <taxon>Dinosauria</taxon>
        <taxon>Saurischia</taxon>
        <taxon>Theropoda</taxon>
        <taxon>Coelurosauria</taxon>
        <taxon>Aves</taxon>
        <taxon>Neognathae</taxon>
        <taxon>Neoaves</taxon>
        <taxon>Aequornithes</taxon>
        <taxon>Sphenisciformes</taxon>
        <taxon>Spheniscidae</taxon>
        <taxon>Aptenodytes</taxon>
    </lineage>
</organism>
<sequence length="146" mass="16164">VHWSAEEKQLITGLWGKVNVAECGAEALARLLIVYPWTQRFFASFGNLSSPAAVLANPMVRAHGKKVLTSFGDAVKNMDNIKNTFAQLSELHCDKLHVDPENFRLLGDILIIVLAAHFSKDFTPDCQAAAQKLVRVVAHALARKYH</sequence>
<dbReference type="PIR" id="S46403">
    <property type="entry name" value="S46403"/>
</dbReference>
<dbReference type="SMR" id="P80216"/>
<dbReference type="GO" id="GO:0072562">
    <property type="term" value="C:blood microparticle"/>
    <property type="evidence" value="ECO:0007669"/>
    <property type="project" value="TreeGrafter"/>
</dbReference>
<dbReference type="GO" id="GO:0031838">
    <property type="term" value="C:haptoglobin-hemoglobin complex"/>
    <property type="evidence" value="ECO:0007669"/>
    <property type="project" value="TreeGrafter"/>
</dbReference>
<dbReference type="GO" id="GO:0005833">
    <property type="term" value="C:hemoglobin complex"/>
    <property type="evidence" value="ECO:0007669"/>
    <property type="project" value="InterPro"/>
</dbReference>
<dbReference type="GO" id="GO:0031720">
    <property type="term" value="F:haptoglobin binding"/>
    <property type="evidence" value="ECO:0007669"/>
    <property type="project" value="TreeGrafter"/>
</dbReference>
<dbReference type="GO" id="GO:0020037">
    <property type="term" value="F:heme binding"/>
    <property type="evidence" value="ECO:0007669"/>
    <property type="project" value="InterPro"/>
</dbReference>
<dbReference type="GO" id="GO:0046872">
    <property type="term" value="F:metal ion binding"/>
    <property type="evidence" value="ECO:0007669"/>
    <property type="project" value="UniProtKB-KW"/>
</dbReference>
<dbReference type="GO" id="GO:0043177">
    <property type="term" value="F:organic acid binding"/>
    <property type="evidence" value="ECO:0007669"/>
    <property type="project" value="TreeGrafter"/>
</dbReference>
<dbReference type="GO" id="GO:0019825">
    <property type="term" value="F:oxygen binding"/>
    <property type="evidence" value="ECO:0007669"/>
    <property type="project" value="InterPro"/>
</dbReference>
<dbReference type="GO" id="GO:0005344">
    <property type="term" value="F:oxygen carrier activity"/>
    <property type="evidence" value="ECO:0007669"/>
    <property type="project" value="UniProtKB-KW"/>
</dbReference>
<dbReference type="GO" id="GO:0004601">
    <property type="term" value="F:peroxidase activity"/>
    <property type="evidence" value="ECO:0007669"/>
    <property type="project" value="TreeGrafter"/>
</dbReference>
<dbReference type="GO" id="GO:0042744">
    <property type="term" value="P:hydrogen peroxide catabolic process"/>
    <property type="evidence" value="ECO:0007669"/>
    <property type="project" value="TreeGrafter"/>
</dbReference>
<dbReference type="CDD" id="cd08925">
    <property type="entry name" value="Hb-beta-like"/>
    <property type="match status" value="1"/>
</dbReference>
<dbReference type="FunFam" id="1.10.490.10:FF:000001">
    <property type="entry name" value="Hemoglobin subunit beta"/>
    <property type="match status" value="1"/>
</dbReference>
<dbReference type="Gene3D" id="1.10.490.10">
    <property type="entry name" value="Globins"/>
    <property type="match status" value="1"/>
</dbReference>
<dbReference type="InterPro" id="IPR000971">
    <property type="entry name" value="Globin"/>
</dbReference>
<dbReference type="InterPro" id="IPR009050">
    <property type="entry name" value="Globin-like_sf"/>
</dbReference>
<dbReference type="InterPro" id="IPR012292">
    <property type="entry name" value="Globin/Proto"/>
</dbReference>
<dbReference type="InterPro" id="IPR002337">
    <property type="entry name" value="Hemoglobin_b"/>
</dbReference>
<dbReference type="InterPro" id="IPR050056">
    <property type="entry name" value="Hemoglobin_oxygen_transport"/>
</dbReference>
<dbReference type="PANTHER" id="PTHR11442">
    <property type="entry name" value="HEMOGLOBIN FAMILY MEMBER"/>
    <property type="match status" value="1"/>
</dbReference>
<dbReference type="PANTHER" id="PTHR11442:SF7">
    <property type="entry name" value="HEMOGLOBIN SUBUNIT EPSILON"/>
    <property type="match status" value="1"/>
</dbReference>
<dbReference type="Pfam" id="PF00042">
    <property type="entry name" value="Globin"/>
    <property type="match status" value="1"/>
</dbReference>
<dbReference type="PRINTS" id="PR00814">
    <property type="entry name" value="BETAHAEM"/>
</dbReference>
<dbReference type="SUPFAM" id="SSF46458">
    <property type="entry name" value="Globin-like"/>
    <property type="match status" value="1"/>
</dbReference>
<dbReference type="PROSITE" id="PS01033">
    <property type="entry name" value="GLOBIN"/>
    <property type="match status" value="1"/>
</dbReference>
<proteinExistence type="evidence at protein level"/>
<reference key="1">
    <citation type="journal article" date="1994" name="J. Mol. Biol.">
        <title>Adaptation to extreme environments: structure-function relationships in Emperor penguin haemoglobin.</title>
        <authorList>
            <person name="Tamburrini M."/>
            <person name="Condo S.G."/>
            <person name="di Prisco G."/>
            <person name="Giardina B."/>
        </authorList>
    </citation>
    <scope>PROTEIN SEQUENCE</scope>
</reference>
<feature type="chain" id="PRO_0000052878" description="Hemoglobin subunit beta">
    <location>
        <begin position="1"/>
        <end position="146"/>
    </location>
</feature>
<feature type="domain" description="Globin" evidence="1">
    <location>
        <begin position="2"/>
        <end position="146"/>
    </location>
</feature>
<feature type="binding site" description="distal binding residue">
    <location>
        <position position="63"/>
    </location>
    <ligand>
        <name>heme b</name>
        <dbReference type="ChEBI" id="CHEBI:60344"/>
    </ligand>
    <ligandPart>
        <name>Fe</name>
        <dbReference type="ChEBI" id="CHEBI:18248"/>
    </ligandPart>
</feature>
<feature type="binding site" description="proximal binding residue">
    <location>
        <position position="92"/>
    </location>
    <ligand>
        <name>heme b</name>
        <dbReference type="ChEBI" id="CHEBI:60344"/>
    </ligand>
    <ligandPart>
        <name>Fe</name>
        <dbReference type="ChEBI" id="CHEBI:18248"/>
    </ligandPart>
</feature>
<gene>
    <name type="primary">HBB</name>
</gene>
<protein>
    <recommendedName>
        <fullName>Hemoglobin subunit beta</fullName>
    </recommendedName>
    <alternativeName>
        <fullName>Beta-globin</fullName>
    </alternativeName>
    <alternativeName>
        <fullName>Hemoglobin beta chain</fullName>
    </alternativeName>
</protein>
<comment type="function">
    <text>Involved in oxygen transport from the lung to the various peripheral tissues.</text>
</comment>
<comment type="subunit">
    <text>Heterotetramer of two alpha chains and two beta chains.</text>
</comment>
<comment type="tissue specificity">
    <text>Red blood cells.</text>
</comment>
<comment type="similarity">
    <text evidence="1">Belongs to the globin family.</text>
</comment>
<keyword id="KW-0903">Direct protein sequencing</keyword>
<keyword id="KW-0349">Heme</keyword>
<keyword id="KW-0408">Iron</keyword>
<keyword id="KW-0479">Metal-binding</keyword>
<keyword id="KW-0561">Oxygen transport</keyword>
<keyword id="KW-0813">Transport</keyword>
<evidence type="ECO:0000255" key="1">
    <source>
        <dbReference type="PROSITE-ProRule" id="PRU00238"/>
    </source>
</evidence>
<name>HBB_APTFO</name>